<protein>
    <recommendedName>
        <fullName evidence="1">Neuraminidase</fullName>
        <ecNumber evidence="1">3.2.1.18</ecNumber>
    </recommendedName>
</protein>
<proteinExistence type="evidence at transcript level"/>
<dbReference type="EC" id="3.2.1.18" evidence="1"/>
<dbReference type="EMBL" id="AF494253">
    <property type="protein sequence ID" value="AAM76693.1"/>
    <property type="molecule type" value="Genomic_RNA"/>
</dbReference>
<dbReference type="EMBL" id="Y14193">
    <property type="protein sequence ID" value="CAB40419.1"/>
    <property type="molecule type" value="Genomic_RNA"/>
</dbReference>
<dbReference type="EMBL" id="Y14194">
    <property type="protein sequence ID" value="CAB40420.1"/>
    <property type="molecule type" value="Genomic_RNA"/>
</dbReference>
<dbReference type="EMBL" id="AF250357">
    <property type="protein sequence ID" value="AAF77037.1"/>
    <property type="molecule type" value="mRNA"/>
</dbReference>
<dbReference type="SMR" id="Q8JSD9"/>
<dbReference type="CAZy" id="GH34">
    <property type="family name" value="Glycoside Hydrolase Family 34"/>
</dbReference>
<dbReference type="GlyCosmos" id="Q8JSD9">
    <property type="glycosylation" value="8 sites, No reported glycans"/>
</dbReference>
<dbReference type="SABIO-RK" id="Q8JSD9"/>
<dbReference type="GO" id="GO:0020002">
    <property type="term" value="C:host cell plasma membrane"/>
    <property type="evidence" value="ECO:0007669"/>
    <property type="project" value="UniProtKB-SubCell"/>
</dbReference>
<dbReference type="GO" id="GO:0016020">
    <property type="term" value="C:membrane"/>
    <property type="evidence" value="ECO:0007669"/>
    <property type="project" value="UniProtKB-UniRule"/>
</dbReference>
<dbReference type="GO" id="GO:0055036">
    <property type="term" value="C:virion membrane"/>
    <property type="evidence" value="ECO:0007669"/>
    <property type="project" value="UniProtKB-SubCell"/>
</dbReference>
<dbReference type="GO" id="GO:0004308">
    <property type="term" value="F:exo-alpha-sialidase activity"/>
    <property type="evidence" value="ECO:0007669"/>
    <property type="project" value="UniProtKB-UniRule"/>
</dbReference>
<dbReference type="GO" id="GO:0046872">
    <property type="term" value="F:metal ion binding"/>
    <property type="evidence" value="ECO:0007669"/>
    <property type="project" value="UniProtKB-UniRule"/>
</dbReference>
<dbReference type="GO" id="GO:0005975">
    <property type="term" value="P:carbohydrate metabolic process"/>
    <property type="evidence" value="ECO:0007669"/>
    <property type="project" value="InterPro"/>
</dbReference>
<dbReference type="GO" id="GO:0046761">
    <property type="term" value="P:viral budding from plasma membrane"/>
    <property type="evidence" value="ECO:0007669"/>
    <property type="project" value="UniProtKB-UniRule"/>
</dbReference>
<dbReference type="CDD" id="cd15483">
    <property type="entry name" value="Influenza_NA"/>
    <property type="match status" value="1"/>
</dbReference>
<dbReference type="FunFam" id="2.120.10.10:FF:000001">
    <property type="entry name" value="Neuraminidase"/>
    <property type="match status" value="1"/>
</dbReference>
<dbReference type="Gene3D" id="2.120.10.10">
    <property type="match status" value="1"/>
</dbReference>
<dbReference type="HAMAP" id="MF_04071">
    <property type="entry name" value="INFV_NRAM"/>
    <property type="match status" value="1"/>
</dbReference>
<dbReference type="InterPro" id="IPR001860">
    <property type="entry name" value="Glyco_hydro_34"/>
</dbReference>
<dbReference type="InterPro" id="IPR033654">
    <property type="entry name" value="Sialidase_Influenza_A/B"/>
</dbReference>
<dbReference type="InterPro" id="IPR036278">
    <property type="entry name" value="Sialidase_sf"/>
</dbReference>
<dbReference type="Pfam" id="PF00064">
    <property type="entry name" value="Neur"/>
    <property type="match status" value="1"/>
</dbReference>
<dbReference type="SUPFAM" id="SSF50939">
    <property type="entry name" value="Sialidases"/>
    <property type="match status" value="1"/>
</dbReference>
<sequence length="469" mass="51499">MNPNQKIITIGSICMVVGIISLILQIGNIVSIWISHSIQTGNQNHTGTCDQSIITYKNSTWVNQTYVNISNTNVVAGKDTTSVILAGNSSLCPIRGWAIYSKDNGVRIGSKGDVFVIREPFISCSHLECKTFFLTQGALLNDKHSNGTVKDRSPYRALMSCPVGEAPSPYNSRFESVAWSASACHDGMGWLTIGISGPDDGAVAVLKYNGIITETIKSWRKEILRTQESECVCVNGSCFTIMTDGPSGGPASYKIFKIEKGKVTKSIELDAPNSHYEECSCYPDTSKVMCVCRDNWHGSNRPWVSFDQNLDYQMGYICSGVFGDNPRPKDGKGSCGPVNVDGADGVKGFSYRYGNGGWIGRTKSNSSRKGFEMIWDPNGWTDPDSNFLVKQDIVAMTDWSGYSGSFVQHPELTGLDCMRPCFWVELIRGRPKENTIWTSGSSISFCGVNSDTVDWSWPDDAELPLNIDK</sequence>
<accession>Q8JSD9</accession>
<accession>Q9WMK7</accession>
<accession>Q9WMK8</accession>
<organism>
    <name type="scientific">Influenza A virus (strain A/Fort Monmouth/1/1947 H1N1)</name>
    <dbReference type="NCBI Taxonomy" id="380282"/>
    <lineage>
        <taxon>Viruses</taxon>
        <taxon>Riboviria</taxon>
        <taxon>Orthornavirae</taxon>
        <taxon>Negarnaviricota</taxon>
        <taxon>Polyploviricotina</taxon>
        <taxon>Insthoviricetes</taxon>
        <taxon>Articulavirales</taxon>
        <taxon>Orthomyxoviridae</taxon>
        <taxon>Alphainfluenzavirus</taxon>
        <taxon>Alphainfluenzavirus influenzae</taxon>
        <taxon>Influenza A virus</taxon>
    </lineage>
</organism>
<reference key="1">
    <citation type="journal article" date="1999" name="Virus Res.">
        <title>Genetic analysis of mouse-adapted influenza A virus identifies roles for the NA, PB1, and PB2 genes in virulence.</title>
        <authorList>
            <person name="Brown E.G."/>
            <person name="Bailly J.E."/>
        </authorList>
    </citation>
    <scope>NUCLEOTIDE SEQUENCE [GENOMIC RNA]</scope>
    <source>
        <strain>A/Fort Monmouth/1/1947-MA</strain>
    </source>
</reference>
<reference key="2">
    <citation type="journal article" date="2000" name="Proc. Natl. Acad. Sci. U.S.A.">
        <title>Characterization of the 1918 'Spanish' influenza virus neuraminidase gene.</title>
        <authorList>
            <person name="Reid A.H."/>
            <person name="Fanning T.G."/>
            <person name="Janczewski T.A."/>
            <person name="Taubenberger J.K."/>
        </authorList>
    </citation>
    <scope>NUCLEOTIDE SEQUENCE [MRNA]</scope>
    <source>
        <strain>A/Fort Monmouth/1/1947-MA</strain>
    </source>
</reference>
<reference key="3">
    <citation type="journal article" date="2002" name="Proc. Natl. Acad. Sci. U.S.A.">
        <title>The total influenza vaccine failure of 1947 revisited: major intrasubtypic antigenic change can explain failure of vaccine in a post-World War II epidemic.</title>
        <authorList>
            <person name="Kilbourne E.D."/>
            <person name="Smith C."/>
            <person name="Brett I."/>
            <person name="Pokorny B.A."/>
            <person name="Johansson B."/>
            <person name="Cox N."/>
        </authorList>
    </citation>
    <scope>NUCLEOTIDE SEQUENCE [GENOMIC RNA]</scope>
</reference>
<reference key="4">
    <citation type="journal article" date="2004" name="Virus Res.">
        <title>Assembly and budding of influenza virus.</title>
        <authorList>
            <person name="Nayak D.P."/>
            <person name="Hui E.K."/>
            <person name="Barman S."/>
        </authorList>
    </citation>
    <scope>REVIEW</scope>
</reference>
<reference key="5">
    <citation type="journal article" date="2005" name="N. Engl. J. Med.">
        <title>Neuraminidase inhibitors for influenza.</title>
        <authorList>
            <person name="Moscona A."/>
        </authorList>
    </citation>
    <scope>REVIEW</scope>
</reference>
<reference key="6">
    <citation type="journal article" date="2005" name="Biol. Pharm. Bull.">
        <title>Sialobiology of influenza: molecular mechanism of host range variation of influenza viruses.</title>
        <authorList>
            <person name="Suzuki Y."/>
        </authorList>
    </citation>
    <scope>REVIEW</scope>
</reference>
<name>NRAM_I47A0</name>
<organismHost>
    <name type="scientific">Aves</name>
    <dbReference type="NCBI Taxonomy" id="8782"/>
</organismHost>
<organismHost>
    <name type="scientific">Homo sapiens</name>
    <name type="common">Human</name>
    <dbReference type="NCBI Taxonomy" id="9606"/>
</organismHost>
<organismHost>
    <name type="scientific">Sus scrofa</name>
    <name type="common">Pig</name>
    <dbReference type="NCBI Taxonomy" id="9823"/>
</organismHost>
<feature type="chain" id="PRO_0000280130" description="Neuraminidase">
    <location>
        <begin position="1"/>
        <end position="469"/>
    </location>
</feature>
<feature type="topological domain" description="Intravirion" evidence="1">
    <location>
        <begin position="1"/>
        <end position="6"/>
    </location>
</feature>
<feature type="transmembrane region" description="Helical" evidence="1">
    <location>
        <begin position="7"/>
        <end position="27"/>
    </location>
</feature>
<feature type="topological domain" description="Virion surface" evidence="1">
    <location>
        <begin position="28"/>
        <end position="469"/>
    </location>
</feature>
<feature type="region of interest" description="Involved in apical transport and lipid raft association" evidence="1">
    <location>
        <begin position="11"/>
        <end position="33"/>
    </location>
</feature>
<feature type="region of interest" description="Hypervariable stalk region" evidence="1">
    <location>
        <begin position="36"/>
        <end position="90"/>
    </location>
</feature>
<feature type="region of interest" description="Head of neuraminidase" evidence="1">
    <location>
        <begin position="91"/>
        <end position="469"/>
    </location>
</feature>
<feature type="active site" description="Proton donor/acceptor" evidence="1">
    <location>
        <position position="151"/>
    </location>
</feature>
<feature type="active site" description="Nucleophile" evidence="1">
    <location>
        <position position="402"/>
    </location>
</feature>
<feature type="binding site" evidence="1">
    <location>
        <position position="118"/>
    </location>
    <ligand>
        <name>substrate</name>
    </ligand>
</feature>
<feature type="binding site" evidence="1">
    <location>
        <position position="152"/>
    </location>
    <ligand>
        <name>substrate</name>
    </ligand>
</feature>
<feature type="binding site" evidence="1">
    <location>
        <begin position="277"/>
        <end position="278"/>
    </location>
    <ligand>
        <name>substrate</name>
    </ligand>
</feature>
<feature type="binding site" evidence="1">
    <location>
        <position position="293"/>
    </location>
    <ligand>
        <name>substrate</name>
    </ligand>
</feature>
<feature type="binding site" evidence="1">
    <location>
        <position position="294"/>
    </location>
    <ligand>
        <name>Ca(2+)</name>
        <dbReference type="ChEBI" id="CHEBI:29108"/>
    </ligand>
</feature>
<feature type="binding site" evidence="1">
    <location>
        <position position="298"/>
    </location>
    <ligand>
        <name>Ca(2+)</name>
        <dbReference type="ChEBI" id="CHEBI:29108"/>
    </ligand>
</feature>
<feature type="binding site" evidence="1">
    <location>
        <position position="324"/>
    </location>
    <ligand>
        <name>Ca(2+)</name>
        <dbReference type="ChEBI" id="CHEBI:29108"/>
    </ligand>
</feature>
<feature type="binding site" evidence="1">
    <location>
        <position position="368"/>
    </location>
    <ligand>
        <name>substrate</name>
    </ligand>
</feature>
<feature type="glycosylation site" description="N-linked (GlcNAc...) asparagine; by host" evidence="1">
    <location>
        <position position="44"/>
    </location>
</feature>
<feature type="glycosylation site" description="N-linked (GlcNAc...) asparagine; by host" evidence="1">
    <location>
        <position position="58"/>
    </location>
</feature>
<feature type="glycosylation site" description="N-linked (GlcNAc...) asparagine; by host" evidence="1">
    <location>
        <position position="63"/>
    </location>
</feature>
<feature type="glycosylation site" description="N-linked (GlcNAc...) asparagine; by host" evidence="1">
    <location>
        <position position="68"/>
    </location>
</feature>
<feature type="glycosylation site" description="N-linked (GlcNAc...) asparagine; by host" evidence="1">
    <location>
        <position position="88"/>
    </location>
</feature>
<feature type="glycosylation site" description="N-linked (GlcNAc...) asparagine; by host" evidence="1">
    <location>
        <position position="146"/>
    </location>
</feature>
<feature type="glycosylation site" description="N-linked (GlcNAc...) asparagine; by host" evidence="1">
    <location>
        <position position="235"/>
    </location>
</feature>
<feature type="glycosylation site" description="N-linked (GlcNAc...) asparagine; by host" evidence="1">
    <location>
        <position position="365"/>
    </location>
</feature>
<feature type="disulfide bond" evidence="1">
    <location>
        <begin position="92"/>
        <end position="417"/>
    </location>
</feature>
<feature type="disulfide bond" evidence="1">
    <location>
        <begin position="124"/>
        <end position="129"/>
    </location>
</feature>
<feature type="disulfide bond" evidence="1">
    <location>
        <begin position="184"/>
        <end position="231"/>
    </location>
</feature>
<feature type="disulfide bond" evidence="1">
    <location>
        <begin position="233"/>
        <end position="238"/>
    </location>
</feature>
<feature type="disulfide bond" evidence="1">
    <location>
        <begin position="279"/>
        <end position="292"/>
    </location>
</feature>
<feature type="disulfide bond" evidence="1">
    <location>
        <begin position="281"/>
        <end position="290"/>
    </location>
</feature>
<feature type="disulfide bond" evidence="1">
    <location>
        <begin position="318"/>
        <end position="335"/>
    </location>
</feature>
<feature type="disulfide bond" evidence="1">
    <location>
        <begin position="421"/>
        <end position="446"/>
    </location>
</feature>
<feature type="sequence variant" description="In strain: A/Fort Monmouth/1/1947-MA.">
    <location>
        <begin position="68"/>
        <end position="72"/>
    </location>
</feature>
<feature type="sequence variant" description="In strain: A/Fort Monmouth/1/1947-MA.">
    <original>K</original>
    <variation>R</variation>
    <location>
        <position position="130"/>
    </location>
</feature>
<feature type="sequence variant" description="In strain: A/Fort Monmouth/1/1947-MA.">
    <original>N</original>
    <variation>Y</variation>
    <location>
        <position position="339"/>
    </location>
</feature>
<feature type="sequence variant" description="In strain: A/Fort Monmouth/1/1947-MA.">
    <original>D</original>
    <variation>N</variation>
    <location>
        <position position="344"/>
    </location>
</feature>
<feature type="sequence variant" description="In strain: A/Fort Monmouth/1/1947-MA.">
    <original>R</original>
    <variation>K</variation>
    <location>
        <position position="352"/>
    </location>
</feature>
<feature type="sequence variant" description="In strain: A/Fort Monmouth/1/1947-MA.">
    <original>G</original>
    <variation>V</variation>
    <location>
        <position position="357"/>
    </location>
</feature>
<feature type="sequence variant" description="In strain: A/Fort Monmouth/1/1947-MA.">
    <original>K</original>
    <variation>Q</variation>
    <location>
        <position position="369"/>
    </location>
</feature>
<feature type="sequence variant" description="In strain: A/Fort Monmouth/1/1947-MA.">
    <original>DP</original>
    <variation>ET</variation>
    <location>
        <begin position="382"/>
        <end position="383"/>
    </location>
</feature>
<feature type="sequence variant" description="In strain: A/Fort Monmouth/1/1947-MA.">
    <original>LV</original>
    <variation>FT</variation>
    <location>
        <begin position="388"/>
        <end position="389"/>
    </location>
</feature>
<feature type="sequence variant" description="In strain: A/Fort Monmouth/1/1947-MA.">
    <original>I</original>
    <variation>V</variation>
    <location>
        <position position="393"/>
    </location>
</feature>
<feature type="sequence variant" description="In strain: A/Fort Monmouth/1/1947-MA.">
    <original>M</original>
    <variation>V</variation>
    <location>
        <position position="396"/>
    </location>
</feature>
<feature type="sequence variant" description="In strain: A/Fort Monmouth/1/1947-MA.">
    <original>D</original>
    <variation>G</variation>
    <location>
        <position position="460"/>
    </location>
</feature>
<feature type="sequence variant" description="In strain: A/Fort Monmouth/1/1947-MA.">
    <original>LN</original>
    <variation>FT</variation>
    <location>
        <begin position="465"/>
        <end position="466"/>
    </location>
</feature>
<feature type="sequence conflict" description="In Ref. 1; CAB40420." ref="1">
    <original>N</original>
    <variation>I</variation>
    <location>
        <position position="365"/>
    </location>
</feature>
<keyword id="KW-0106">Calcium</keyword>
<keyword id="KW-1015">Disulfide bond</keyword>
<keyword id="KW-0325">Glycoprotein</keyword>
<keyword id="KW-0326">Glycosidase</keyword>
<keyword id="KW-1032">Host cell membrane</keyword>
<keyword id="KW-1043">Host membrane</keyword>
<keyword id="KW-0378">Hydrolase</keyword>
<keyword id="KW-0472">Membrane</keyword>
<keyword id="KW-0479">Metal-binding</keyword>
<keyword id="KW-0735">Signal-anchor</keyword>
<keyword id="KW-0812">Transmembrane</keyword>
<keyword id="KW-1133">Transmembrane helix</keyword>
<keyword id="KW-0946">Virion</keyword>
<evidence type="ECO:0000255" key="1">
    <source>
        <dbReference type="HAMAP-Rule" id="MF_04071"/>
    </source>
</evidence>
<gene>
    <name evidence="1" type="primary">NA</name>
</gene>
<comment type="function">
    <text evidence="1">Catalyzes the removal of terminal sialic acid residues from viral and cellular glycoconjugates. Cleaves off the terminal sialic acids on the glycosylated HA during virus budding to facilitate virus release. Additionally helps virus spread through the circulation by further removing sialic acids from the cell surface. These cleavages prevent self-aggregation and ensure the efficient spread of the progeny virus from cell to cell. Otherwise, infection would be limited to one round of replication. Described as a receptor-destroying enzyme because it cleaves a terminal sialic acid from the cellular receptors. May facilitate viral invasion of the upper airways by cleaving the sialic acid moieties on the mucin of the airway epithelial cells. Likely to plays a role in the budding process through its association with lipid rafts during intracellular transport. May additionally display a raft-association independent effect on budding. Plays a role in the determination of host range restriction on replication and virulence. Sialidase activity in late endosome/lysosome traffic seems to enhance virus replication.</text>
</comment>
<comment type="catalytic activity">
    <reaction evidence="1">
        <text>Hydrolysis of alpha-(2-&gt;3)-, alpha-(2-&gt;6)-, alpha-(2-&gt;8)- glycosidic linkages of terminal sialic acid residues in oligosaccharides, glycoproteins, glycolipids, colominic acid and synthetic substrates.</text>
        <dbReference type="EC" id="3.2.1.18"/>
    </reaction>
</comment>
<comment type="cofactor">
    <cofactor evidence="1">
        <name>Ca(2+)</name>
        <dbReference type="ChEBI" id="CHEBI:29108"/>
    </cofactor>
</comment>
<comment type="activity regulation">
    <text evidence="1">Inhibited by the neuraminidase inhibitors zanamivir (Relenza) and oseltamivir (Tamiflu). These drugs interfere with the release of progeny virus from infected cells and are effective against all influenza strains. Resistance to neuraminidase inhibitors is quite rare.</text>
</comment>
<comment type="subunit">
    <text evidence="1">Homotetramer.</text>
</comment>
<comment type="subcellular location">
    <subcellularLocation>
        <location evidence="1">Virion membrane</location>
    </subcellularLocation>
    <subcellularLocation>
        <location evidence="1">Host apical cell membrane</location>
        <topology evidence="1">Single-pass type II membrane protein</topology>
    </subcellularLocation>
    <text evidence="1">Preferentially accumulates at the apical plasma membrane in infected polarized epithelial cells, which is the virus assembly site. Uses lipid rafts for cell surface transport and apical sorting. In the virion, forms a mushroom-shaped spike on the surface of the membrane.</text>
</comment>
<comment type="domain">
    <text evidence="1">Intact N-terminus is essential for virion morphogenesis. Possesses two apical sorting signals, one in the ectodomain, which is likely to be a glycan, and the other in the transmembrane domain. The transmembrane domain also plays a role in lipid raft association.</text>
</comment>
<comment type="PTM">
    <text evidence="1">N-glycosylated.</text>
</comment>
<comment type="miscellaneous">
    <text>The influenza A genome consist of 8 RNA segments. Genetic variation of hemagglutinin and/or neuraminidase genes results in the emergence of new influenza strains. The mechanism of variation can be the result of point mutations or the result of genetic reassortment between segments of two different strains.</text>
</comment>
<comment type="similarity">
    <text evidence="1">Belongs to the glycosyl hydrolase 34 family.</text>
</comment>